<comment type="function">
    <text evidence="1">Catalyzes the reversible interconversion of serine and glycine with tetrahydrofolate (THF) serving as the one-carbon carrier. This reaction serves as the major source of one-carbon groups required for the biosynthesis of purines, thymidylate, methionine, and other important biomolecules. Also exhibits THF-independent aldolase activity toward beta-hydroxyamino acids, producing glycine and aldehydes, via a retro-aldol mechanism.</text>
</comment>
<comment type="catalytic activity">
    <reaction evidence="1">
        <text>(6R)-5,10-methylene-5,6,7,8-tetrahydrofolate + glycine + H2O = (6S)-5,6,7,8-tetrahydrofolate + L-serine</text>
        <dbReference type="Rhea" id="RHEA:15481"/>
        <dbReference type="ChEBI" id="CHEBI:15377"/>
        <dbReference type="ChEBI" id="CHEBI:15636"/>
        <dbReference type="ChEBI" id="CHEBI:33384"/>
        <dbReference type="ChEBI" id="CHEBI:57305"/>
        <dbReference type="ChEBI" id="CHEBI:57453"/>
        <dbReference type="EC" id="2.1.2.1"/>
    </reaction>
</comment>
<comment type="cofactor">
    <cofactor evidence="1">
        <name>pyridoxal 5'-phosphate</name>
        <dbReference type="ChEBI" id="CHEBI:597326"/>
    </cofactor>
</comment>
<comment type="pathway">
    <text evidence="1">One-carbon metabolism; tetrahydrofolate interconversion.</text>
</comment>
<comment type="pathway">
    <text evidence="1">Amino-acid biosynthesis; glycine biosynthesis; glycine from L-serine: step 1/1.</text>
</comment>
<comment type="subunit">
    <text evidence="1">Homodimer.</text>
</comment>
<comment type="subcellular location">
    <subcellularLocation>
        <location evidence="1">Cytoplasm</location>
    </subcellularLocation>
</comment>
<comment type="similarity">
    <text evidence="1">Belongs to the SHMT family.</text>
</comment>
<accession>B8G933</accession>
<protein>
    <recommendedName>
        <fullName evidence="1">Serine hydroxymethyltransferase</fullName>
        <shortName evidence="1">SHMT</shortName>
        <shortName evidence="1">Serine methylase</shortName>
        <ecNumber evidence="1">2.1.2.1</ecNumber>
    </recommendedName>
</protein>
<keyword id="KW-0028">Amino-acid biosynthesis</keyword>
<keyword id="KW-0963">Cytoplasm</keyword>
<keyword id="KW-0554">One-carbon metabolism</keyword>
<keyword id="KW-0663">Pyridoxal phosphate</keyword>
<keyword id="KW-0808">Transferase</keyword>
<name>GLYA_CHLAD</name>
<feature type="chain" id="PRO_1000195436" description="Serine hydroxymethyltransferase">
    <location>
        <begin position="1"/>
        <end position="418"/>
    </location>
</feature>
<feature type="binding site" evidence="1">
    <location>
        <position position="118"/>
    </location>
    <ligand>
        <name>(6S)-5,6,7,8-tetrahydrofolate</name>
        <dbReference type="ChEBI" id="CHEBI:57453"/>
    </ligand>
</feature>
<feature type="binding site" evidence="1">
    <location>
        <begin position="122"/>
        <end position="124"/>
    </location>
    <ligand>
        <name>(6S)-5,6,7,8-tetrahydrofolate</name>
        <dbReference type="ChEBI" id="CHEBI:57453"/>
    </ligand>
</feature>
<feature type="binding site" evidence="1">
    <location>
        <position position="242"/>
    </location>
    <ligand>
        <name>(6S)-5,6,7,8-tetrahydrofolate</name>
        <dbReference type="ChEBI" id="CHEBI:57453"/>
    </ligand>
</feature>
<feature type="site" description="Plays an important role in substrate specificity" evidence="1">
    <location>
        <position position="226"/>
    </location>
</feature>
<feature type="modified residue" description="N6-(pyridoxal phosphate)lysine" evidence="1">
    <location>
        <position position="227"/>
    </location>
</feature>
<gene>
    <name evidence="1" type="primary">glyA</name>
    <name type="ordered locus">Cagg_3468</name>
</gene>
<organism>
    <name type="scientific">Chloroflexus aggregans (strain MD-66 / DSM 9485)</name>
    <dbReference type="NCBI Taxonomy" id="326427"/>
    <lineage>
        <taxon>Bacteria</taxon>
        <taxon>Bacillati</taxon>
        <taxon>Chloroflexota</taxon>
        <taxon>Chloroflexia</taxon>
        <taxon>Chloroflexales</taxon>
        <taxon>Chloroflexineae</taxon>
        <taxon>Chloroflexaceae</taxon>
        <taxon>Chloroflexus</taxon>
    </lineage>
</organism>
<sequence length="418" mass="45121">MLEHLRATDPIIADLIEREAQRQRQGLELIASENYTSLAVMEAQGSVLTNKYAEGLPGRRYYGGCEFVDAIEQLAIDRACQLFGTSHANVQPHSGAQANIAVFTALLQPGDTILGMRLDHGGHLTHGSPVNFSGKWYNVHFYGVDPQTGQIDYDDLAAKARAIRPKLITSGASAYPRLIDFARMRQIADEVGALLMADIAHIAGLVATGEHPSPVGHAHIITTTTHKTLRGPRGGLILMGEEFAKQINSSVFPGTQGGPLMHVIAGKAVAFGEALRPEFKQYAAQIRRNAKALAEGLHAQGLTLVSGGTDNHLMLVDLRSTGLTGAQAQRALDKAAITVNKNAIPDDPQPPMKTSGIRIGTPAVTTRGMREREMAQIAAWIGEVLMYPDDEVRLARIAAEVAEMCRHFPVPADMVQVR</sequence>
<proteinExistence type="inferred from homology"/>
<reference key="1">
    <citation type="submission" date="2008-12" db="EMBL/GenBank/DDBJ databases">
        <title>Complete sequence of Chloroflexus aggregans DSM 9485.</title>
        <authorList>
            <consortium name="US DOE Joint Genome Institute"/>
            <person name="Lucas S."/>
            <person name="Copeland A."/>
            <person name="Lapidus A."/>
            <person name="Glavina del Rio T."/>
            <person name="Dalin E."/>
            <person name="Tice H."/>
            <person name="Pitluck S."/>
            <person name="Foster B."/>
            <person name="Larimer F."/>
            <person name="Land M."/>
            <person name="Hauser L."/>
            <person name="Kyrpides N."/>
            <person name="Mikhailova N."/>
            <person name="Bryant D.A."/>
            <person name="Richardson P."/>
        </authorList>
    </citation>
    <scope>NUCLEOTIDE SEQUENCE [LARGE SCALE GENOMIC DNA]</scope>
    <source>
        <strain>MD-66 / DSM 9485</strain>
    </source>
</reference>
<evidence type="ECO:0000255" key="1">
    <source>
        <dbReference type="HAMAP-Rule" id="MF_00051"/>
    </source>
</evidence>
<dbReference type="EC" id="2.1.2.1" evidence="1"/>
<dbReference type="EMBL" id="CP001337">
    <property type="protein sequence ID" value="ACL26308.1"/>
    <property type="molecule type" value="Genomic_DNA"/>
</dbReference>
<dbReference type="RefSeq" id="WP_015942155.1">
    <property type="nucleotide sequence ID" value="NC_011831.1"/>
</dbReference>
<dbReference type="SMR" id="B8G933"/>
<dbReference type="STRING" id="326427.Cagg_3468"/>
<dbReference type="KEGG" id="cag:Cagg_3468"/>
<dbReference type="eggNOG" id="COG0112">
    <property type="taxonomic scope" value="Bacteria"/>
</dbReference>
<dbReference type="HOGENOM" id="CLU_022477_2_1_0"/>
<dbReference type="OrthoDB" id="9803846at2"/>
<dbReference type="UniPathway" id="UPA00193"/>
<dbReference type="UniPathway" id="UPA00288">
    <property type="reaction ID" value="UER01023"/>
</dbReference>
<dbReference type="Proteomes" id="UP000002508">
    <property type="component" value="Chromosome"/>
</dbReference>
<dbReference type="GO" id="GO:0005829">
    <property type="term" value="C:cytosol"/>
    <property type="evidence" value="ECO:0007669"/>
    <property type="project" value="TreeGrafter"/>
</dbReference>
<dbReference type="GO" id="GO:0004372">
    <property type="term" value="F:glycine hydroxymethyltransferase activity"/>
    <property type="evidence" value="ECO:0007669"/>
    <property type="project" value="UniProtKB-UniRule"/>
</dbReference>
<dbReference type="GO" id="GO:0030170">
    <property type="term" value="F:pyridoxal phosphate binding"/>
    <property type="evidence" value="ECO:0007669"/>
    <property type="project" value="UniProtKB-UniRule"/>
</dbReference>
<dbReference type="GO" id="GO:0019264">
    <property type="term" value="P:glycine biosynthetic process from serine"/>
    <property type="evidence" value="ECO:0007669"/>
    <property type="project" value="UniProtKB-UniRule"/>
</dbReference>
<dbReference type="GO" id="GO:0035999">
    <property type="term" value="P:tetrahydrofolate interconversion"/>
    <property type="evidence" value="ECO:0007669"/>
    <property type="project" value="UniProtKB-UniRule"/>
</dbReference>
<dbReference type="CDD" id="cd00378">
    <property type="entry name" value="SHMT"/>
    <property type="match status" value="1"/>
</dbReference>
<dbReference type="FunFam" id="3.40.640.10:FF:000001">
    <property type="entry name" value="Serine hydroxymethyltransferase"/>
    <property type="match status" value="1"/>
</dbReference>
<dbReference type="FunFam" id="3.90.1150.10:FF:000003">
    <property type="entry name" value="Serine hydroxymethyltransferase"/>
    <property type="match status" value="1"/>
</dbReference>
<dbReference type="Gene3D" id="3.90.1150.10">
    <property type="entry name" value="Aspartate Aminotransferase, domain 1"/>
    <property type="match status" value="1"/>
</dbReference>
<dbReference type="Gene3D" id="3.40.640.10">
    <property type="entry name" value="Type I PLP-dependent aspartate aminotransferase-like (Major domain)"/>
    <property type="match status" value="1"/>
</dbReference>
<dbReference type="HAMAP" id="MF_00051">
    <property type="entry name" value="SHMT"/>
    <property type="match status" value="1"/>
</dbReference>
<dbReference type="InterPro" id="IPR015424">
    <property type="entry name" value="PyrdxlP-dep_Trfase"/>
</dbReference>
<dbReference type="InterPro" id="IPR015421">
    <property type="entry name" value="PyrdxlP-dep_Trfase_major"/>
</dbReference>
<dbReference type="InterPro" id="IPR015422">
    <property type="entry name" value="PyrdxlP-dep_Trfase_small"/>
</dbReference>
<dbReference type="InterPro" id="IPR001085">
    <property type="entry name" value="Ser_HO-MeTrfase"/>
</dbReference>
<dbReference type="InterPro" id="IPR049943">
    <property type="entry name" value="Ser_HO-MeTrfase-like"/>
</dbReference>
<dbReference type="InterPro" id="IPR019798">
    <property type="entry name" value="Ser_HO-MeTrfase_PLP_BS"/>
</dbReference>
<dbReference type="InterPro" id="IPR039429">
    <property type="entry name" value="SHMT-like_dom"/>
</dbReference>
<dbReference type="NCBIfam" id="NF000586">
    <property type="entry name" value="PRK00011.1"/>
    <property type="match status" value="1"/>
</dbReference>
<dbReference type="PANTHER" id="PTHR11680">
    <property type="entry name" value="SERINE HYDROXYMETHYLTRANSFERASE"/>
    <property type="match status" value="1"/>
</dbReference>
<dbReference type="PANTHER" id="PTHR11680:SF35">
    <property type="entry name" value="SERINE HYDROXYMETHYLTRANSFERASE 1"/>
    <property type="match status" value="1"/>
</dbReference>
<dbReference type="Pfam" id="PF00464">
    <property type="entry name" value="SHMT"/>
    <property type="match status" value="1"/>
</dbReference>
<dbReference type="PIRSF" id="PIRSF000412">
    <property type="entry name" value="SHMT"/>
    <property type="match status" value="1"/>
</dbReference>
<dbReference type="SUPFAM" id="SSF53383">
    <property type="entry name" value="PLP-dependent transferases"/>
    <property type="match status" value="1"/>
</dbReference>
<dbReference type="PROSITE" id="PS00096">
    <property type="entry name" value="SHMT"/>
    <property type="match status" value="1"/>
</dbReference>